<protein>
    <recommendedName>
        <fullName evidence="1">DNA-directed RNA polymerase subunit beta</fullName>
        <shortName evidence="1">RNAP subunit beta</shortName>
        <ecNumber evidence="1">2.7.7.6</ecNumber>
    </recommendedName>
    <alternativeName>
        <fullName evidence="1">RNA polymerase subunit beta</fullName>
    </alternativeName>
    <alternativeName>
        <fullName evidence="1">Transcriptase subunit beta</fullName>
    </alternativeName>
</protein>
<evidence type="ECO:0000255" key="1">
    <source>
        <dbReference type="HAMAP-Rule" id="MF_01321"/>
    </source>
</evidence>
<sequence>MPYSYTEKKRIRKSFAKREDVQDVPFLLATQLQSYLTFLQADTPPSDRASEGLQAAFSSIFPIVSHNGMARLEFVSYVLGEPVFDVKECQQRGLTYASPLRAKVRLVLLDREVSKPTIKEVKEQEVYMGEIPLMTGTGSFVINGTERVIVSQLHRSPGVFFEHDRGKTHSSGKLLFSARVIPYRGSWLDFEFDPKDVLFFRVDRRRKMPVTILLKAIGMTPESILAHFFDFDNFELKSEGGMIEFVPERWKGEMARFDITGRDGNVIVEKDKRINAKHLRDMANANIQRVSVPEEFLYGRVLAKNIVDPDTGEVVAHANDEITESVLSALRAANVRDIQTLYTNDLDRGPYISQTLRTDETADQMAARVAIYRMMRPGEPPTEDAVEALFQRLFYSEETYDLSRVGRMKVNSRLGRGEDITGPMTLTNEDILETIKVLVELRNGRGQIDDIDHLGNRRVRCVGELAENQFRAGLVRVERAVKERLGQAETENLMPHDLINSKPISAAIKEFFGSSQLSQFMDQTNPLSEITHKRRVSALGPGGLTRERAGFEVRDVHPTHYGRVCPIETPEGPNIGLINSMALYARLNEYGFLETPYRKIIDGKVSDQIDYLSAIEESNYVIAQANAALDDEGRFVDDLVACREAGETMLTAPANVHYMDVAPSQIVSVAASLIPFLEHDDANRALMGANMQRQAVPCLRPEKPVVGTGVERTVAVDSGTTVQALRGGVVDHVDAERVVIRVNDDENVAGEVGVDIYNLIKYTRSNQNTNINQRPIVKRGDKVAKGDVLADGASTDLGELALGQNMLIAFMPWNGYNFEDSILISEKVVADDRYTSIHIEELTVVARDTKLGPEEITRDISNLAETQLNRLDDSGIVYIGAEVTADDVLVGKVTPKGETQLTPEEKLLRAIFGEKASDVKDTSLRVPSGMVGTVIDVQVFTREGIVRDKRAQSIIDDELRRYRQDLNDQLRIVENDQFDRIEKLLIGKTVNGGPRKLAKGATITKAYLADLDRWQWFDIRLADEPHAVVLEQAKESLEQKRHQFDLAFEEKRKKLTQGDELPPGVLKMIKVYLAVKRRLQPGDKMAGRHGNKGVVSRITPVEDMPHMADGTPADIVLNPLGVPSRMNVGQVLEVHLGWAAKGVGHRIADMLRDERTAQVKNVRAYLDKVYNTTGTGEQIDTLTDDEVMELAQNLKNGVPFATPVFDGATEEEIGKMLELAYPDEVAKRMQLTDSRTQAWLFDGRTGEKFERPVTVGYMHYLKLHHLVDDKMHARSTGPYSLVTQQPLGGKAQFGGQRFGEMEVWALEAYGAAYTLQEMLTVKSDDITGRTKVYENIVKGDHVIDAGMPESFNVLVKEIRSLALDMDLERN</sequence>
<accession>A9IJ25</accession>
<organism>
    <name type="scientific">Bordetella petrii (strain ATCC BAA-461 / DSM 12804 / CCUG 43448)</name>
    <dbReference type="NCBI Taxonomy" id="340100"/>
    <lineage>
        <taxon>Bacteria</taxon>
        <taxon>Pseudomonadati</taxon>
        <taxon>Pseudomonadota</taxon>
        <taxon>Betaproteobacteria</taxon>
        <taxon>Burkholderiales</taxon>
        <taxon>Alcaligenaceae</taxon>
        <taxon>Bordetella</taxon>
    </lineage>
</organism>
<keyword id="KW-0240">DNA-directed RNA polymerase</keyword>
<keyword id="KW-0548">Nucleotidyltransferase</keyword>
<keyword id="KW-0804">Transcription</keyword>
<keyword id="KW-0808">Transferase</keyword>
<dbReference type="EC" id="2.7.7.6" evidence="1"/>
<dbReference type="EMBL" id="AM902716">
    <property type="protein sequence ID" value="CAP45317.1"/>
    <property type="molecule type" value="Genomic_DNA"/>
</dbReference>
<dbReference type="SMR" id="A9IJ25"/>
<dbReference type="STRING" id="94624.Bpet4965"/>
<dbReference type="KEGG" id="bpt:Bpet4965"/>
<dbReference type="eggNOG" id="COG0085">
    <property type="taxonomic scope" value="Bacteria"/>
</dbReference>
<dbReference type="Proteomes" id="UP000001225">
    <property type="component" value="Chromosome"/>
</dbReference>
<dbReference type="GO" id="GO:0000428">
    <property type="term" value="C:DNA-directed RNA polymerase complex"/>
    <property type="evidence" value="ECO:0007669"/>
    <property type="project" value="UniProtKB-KW"/>
</dbReference>
<dbReference type="GO" id="GO:0003677">
    <property type="term" value="F:DNA binding"/>
    <property type="evidence" value="ECO:0007669"/>
    <property type="project" value="UniProtKB-UniRule"/>
</dbReference>
<dbReference type="GO" id="GO:0003899">
    <property type="term" value="F:DNA-directed RNA polymerase activity"/>
    <property type="evidence" value="ECO:0007669"/>
    <property type="project" value="UniProtKB-UniRule"/>
</dbReference>
<dbReference type="GO" id="GO:0032549">
    <property type="term" value="F:ribonucleoside binding"/>
    <property type="evidence" value="ECO:0007669"/>
    <property type="project" value="InterPro"/>
</dbReference>
<dbReference type="GO" id="GO:0006351">
    <property type="term" value="P:DNA-templated transcription"/>
    <property type="evidence" value="ECO:0007669"/>
    <property type="project" value="UniProtKB-UniRule"/>
</dbReference>
<dbReference type="CDD" id="cd00653">
    <property type="entry name" value="RNA_pol_B_RPB2"/>
    <property type="match status" value="1"/>
</dbReference>
<dbReference type="FunFam" id="2.40.50.100:FF:000006">
    <property type="entry name" value="DNA-directed RNA polymerase subunit beta"/>
    <property type="match status" value="1"/>
</dbReference>
<dbReference type="FunFam" id="3.90.1800.10:FF:000001">
    <property type="entry name" value="DNA-directed RNA polymerase subunit beta"/>
    <property type="match status" value="1"/>
</dbReference>
<dbReference type="Gene3D" id="2.40.50.100">
    <property type="match status" value="1"/>
</dbReference>
<dbReference type="Gene3D" id="2.40.50.150">
    <property type="match status" value="1"/>
</dbReference>
<dbReference type="Gene3D" id="3.90.1100.10">
    <property type="match status" value="2"/>
</dbReference>
<dbReference type="Gene3D" id="6.10.140.1670">
    <property type="match status" value="1"/>
</dbReference>
<dbReference type="Gene3D" id="2.30.150.10">
    <property type="entry name" value="DNA-directed RNA polymerase, beta subunit, external 1 domain"/>
    <property type="match status" value="1"/>
</dbReference>
<dbReference type="Gene3D" id="2.40.270.10">
    <property type="entry name" value="DNA-directed RNA polymerase, subunit 2, domain 6"/>
    <property type="match status" value="1"/>
</dbReference>
<dbReference type="Gene3D" id="3.90.1800.10">
    <property type="entry name" value="RNA polymerase alpha subunit dimerisation domain"/>
    <property type="match status" value="1"/>
</dbReference>
<dbReference type="Gene3D" id="3.90.1110.10">
    <property type="entry name" value="RNA polymerase Rpb2, domain 2"/>
    <property type="match status" value="1"/>
</dbReference>
<dbReference type="HAMAP" id="MF_01321">
    <property type="entry name" value="RNApol_bact_RpoB"/>
    <property type="match status" value="1"/>
</dbReference>
<dbReference type="InterPro" id="IPR042107">
    <property type="entry name" value="DNA-dir_RNA_pol_bsu_ext_1_sf"/>
</dbReference>
<dbReference type="InterPro" id="IPR019462">
    <property type="entry name" value="DNA-dir_RNA_pol_bsu_external_1"/>
</dbReference>
<dbReference type="InterPro" id="IPR015712">
    <property type="entry name" value="DNA-dir_RNA_pol_su2"/>
</dbReference>
<dbReference type="InterPro" id="IPR007120">
    <property type="entry name" value="DNA-dir_RNAP_su2_dom"/>
</dbReference>
<dbReference type="InterPro" id="IPR037033">
    <property type="entry name" value="DNA-dir_RNAP_su2_hyb_sf"/>
</dbReference>
<dbReference type="InterPro" id="IPR010243">
    <property type="entry name" value="RNA_pol_bsu_bac"/>
</dbReference>
<dbReference type="InterPro" id="IPR007121">
    <property type="entry name" value="RNA_pol_bsu_CS"/>
</dbReference>
<dbReference type="InterPro" id="IPR007644">
    <property type="entry name" value="RNA_pol_bsu_protrusion"/>
</dbReference>
<dbReference type="InterPro" id="IPR007642">
    <property type="entry name" value="RNA_pol_Rpb2_2"/>
</dbReference>
<dbReference type="InterPro" id="IPR037034">
    <property type="entry name" value="RNA_pol_Rpb2_2_sf"/>
</dbReference>
<dbReference type="InterPro" id="IPR007645">
    <property type="entry name" value="RNA_pol_Rpb2_3"/>
</dbReference>
<dbReference type="InterPro" id="IPR007641">
    <property type="entry name" value="RNA_pol_Rpb2_7"/>
</dbReference>
<dbReference type="InterPro" id="IPR014724">
    <property type="entry name" value="RNA_pol_RPB2_OB-fold"/>
</dbReference>
<dbReference type="NCBIfam" id="NF001616">
    <property type="entry name" value="PRK00405.1"/>
    <property type="match status" value="1"/>
</dbReference>
<dbReference type="NCBIfam" id="TIGR02013">
    <property type="entry name" value="rpoB"/>
    <property type="match status" value="1"/>
</dbReference>
<dbReference type="PANTHER" id="PTHR20856">
    <property type="entry name" value="DNA-DIRECTED RNA POLYMERASE I SUBUNIT 2"/>
    <property type="match status" value="1"/>
</dbReference>
<dbReference type="Pfam" id="PF04563">
    <property type="entry name" value="RNA_pol_Rpb2_1"/>
    <property type="match status" value="1"/>
</dbReference>
<dbReference type="Pfam" id="PF04561">
    <property type="entry name" value="RNA_pol_Rpb2_2"/>
    <property type="match status" value="2"/>
</dbReference>
<dbReference type="Pfam" id="PF04565">
    <property type="entry name" value="RNA_pol_Rpb2_3"/>
    <property type="match status" value="1"/>
</dbReference>
<dbReference type="Pfam" id="PF10385">
    <property type="entry name" value="RNA_pol_Rpb2_45"/>
    <property type="match status" value="1"/>
</dbReference>
<dbReference type="Pfam" id="PF00562">
    <property type="entry name" value="RNA_pol_Rpb2_6"/>
    <property type="match status" value="1"/>
</dbReference>
<dbReference type="Pfam" id="PF04560">
    <property type="entry name" value="RNA_pol_Rpb2_7"/>
    <property type="match status" value="1"/>
</dbReference>
<dbReference type="SUPFAM" id="SSF64484">
    <property type="entry name" value="beta and beta-prime subunits of DNA dependent RNA-polymerase"/>
    <property type="match status" value="1"/>
</dbReference>
<dbReference type="PROSITE" id="PS01166">
    <property type="entry name" value="RNA_POL_BETA"/>
    <property type="match status" value="1"/>
</dbReference>
<feature type="chain" id="PRO_1000141665" description="DNA-directed RNA polymerase subunit beta">
    <location>
        <begin position="1"/>
        <end position="1370"/>
    </location>
</feature>
<reference key="1">
    <citation type="journal article" date="2008" name="BMC Genomics">
        <title>The missing link: Bordetella petrii is endowed with both the metabolic versatility of environmental bacteria and virulence traits of pathogenic Bordetellae.</title>
        <authorList>
            <person name="Gross R."/>
            <person name="Guzman C.A."/>
            <person name="Sebaihia M."/>
            <person name="Martin dos Santos V.A.P."/>
            <person name="Pieper D.H."/>
            <person name="Koebnik R."/>
            <person name="Lechner M."/>
            <person name="Bartels D."/>
            <person name="Buhrmester J."/>
            <person name="Choudhuri J.V."/>
            <person name="Ebensen T."/>
            <person name="Gaigalat L."/>
            <person name="Herrmann S."/>
            <person name="Khachane A.N."/>
            <person name="Larisch C."/>
            <person name="Link S."/>
            <person name="Linke B."/>
            <person name="Meyer F."/>
            <person name="Mormann S."/>
            <person name="Nakunst D."/>
            <person name="Rueckert C."/>
            <person name="Schneiker-Bekel S."/>
            <person name="Schulze K."/>
            <person name="Voerholter F.-J."/>
            <person name="Yevsa T."/>
            <person name="Engle J.T."/>
            <person name="Goldman W.E."/>
            <person name="Puehler A."/>
            <person name="Goebel U.B."/>
            <person name="Goesmann A."/>
            <person name="Bloecker H."/>
            <person name="Kaiser O."/>
            <person name="Martinez-Arias R."/>
        </authorList>
    </citation>
    <scope>NUCLEOTIDE SEQUENCE [LARGE SCALE GENOMIC DNA]</scope>
    <source>
        <strain>ATCC BAA-461 / DSM 12804 / CCUG 43448</strain>
    </source>
</reference>
<proteinExistence type="inferred from homology"/>
<gene>
    <name evidence="1" type="primary">rpoB</name>
    <name type="ordered locus">Bpet4965</name>
</gene>
<comment type="function">
    <text evidence="1">DNA-dependent RNA polymerase catalyzes the transcription of DNA into RNA using the four ribonucleoside triphosphates as substrates.</text>
</comment>
<comment type="catalytic activity">
    <reaction evidence="1">
        <text>RNA(n) + a ribonucleoside 5'-triphosphate = RNA(n+1) + diphosphate</text>
        <dbReference type="Rhea" id="RHEA:21248"/>
        <dbReference type="Rhea" id="RHEA-COMP:14527"/>
        <dbReference type="Rhea" id="RHEA-COMP:17342"/>
        <dbReference type="ChEBI" id="CHEBI:33019"/>
        <dbReference type="ChEBI" id="CHEBI:61557"/>
        <dbReference type="ChEBI" id="CHEBI:140395"/>
        <dbReference type="EC" id="2.7.7.6"/>
    </reaction>
</comment>
<comment type="subunit">
    <text evidence="1">The RNAP catalytic core consists of 2 alpha, 1 beta, 1 beta' and 1 omega subunit. When a sigma factor is associated with the core the holoenzyme is formed, which can initiate transcription.</text>
</comment>
<comment type="similarity">
    <text evidence="1">Belongs to the RNA polymerase beta chain family.</text>
</comment>
<name>RPOB_BORPD</name>